<name>ARGC_PECCP</name>
<accession>C6DI81</accession>
<dbReference type="EC" id="1.2.1.38" evidence="1"/>
<dbReference type="EMBL" id="CP001657">
    <property type="protein sequence ID" value="ACT15075.1"/>
    <property type="molecule type" value="Genomic_DNA"/>
</dbReference>
<dbReference type="RefSeq" id="WP_015842152.1">
    <property type="nucleotide sequence ID" value="NC_012917.1"/>
</dbReference>
<dbReference type="SMR" id="C6DI81"/>
<dbReference type="STRING" id="561230.PC1_4060"/>
<dbReference type="GeneID" id="90769509"/>
<dbReference type="KEGG" id="pct:PC1_4060"/>
<dbReference type="eggNOG" id="COG0002">
    <property type="taxonomic scope" value="Bacteria"/>
</dbReference>
<dbReference type="HOGENOM" id="CLU_006384_0_1_6"/>
<dbReference type="OrthoDB" id="9801289at2"/>
<dbReference type="UniPathway" id="UPA00068">
    <property type="reaction ID" value="UER00108"/>
</dbReference>
<dbReference type="Proteomes" id="UP000002736">
    <property type="component" value="Chromosome"/>
</dbReference>
<dbReference type="GO" id="GO:0005737">
    <property type="term" value="C:cytoplasm"/>
    <property type="evidence" value="ECO:0007669"/>
    <property type="project" value="UniProtKB-SubCell"/>
</dbReference>
<dbReference type="GO" id="GO:0003942">
    <property type="term" value="F:N-acetyl-gamma-glutamyl-phosphate reductase activity"/>
    <property type="evidence" value="ECO:0007669"/>
    <property type="project" value="UniProtKB-UniRule"/>
</dbReference>
<dbReference type="GO" id="GO:0051287">
    <property type="term" value="F:NAD binding"/>
    <property type="evidence" value="ECO:0007669"/>
    <property type="project" value="InterPro"/>
</dbReference>
<dbReference type="GO" id="GO:0070401">
    <property type="term" value="F:NADP+ binding"/>
    <property type="evidence" value="ECO:0007669"/>
    <property type="project" value="InterPro"/>
</dbReference>
<dbReference type="GO" id="GO:0006526">
    <property type="term" value="P:L-arginine biosynthetic process"/>
    <property type="evidence" value="ECO:0007669"/>
    <property type="project" value="UniProtKB-UniRule"/>
</dbReference>
<dbReference type="CDD" id="cd23934">
    <property type="entry name" value="AGPR_1_C"/>
    <property type="match status" value="1"/>
</dbReference>
<dbReference type="CDD" id="cd17895">
    <property type="entry name" value="AGPR_1_N"/>
    <property type="match status" value="1"/>
</dbReference>
<dbReference type="FunFam" id="3.30.360.10:FF:000014">
    <property type="entry name" value="N-acetyl-gamma-glutamyl-phosphate reductase"/>
    <property type="match status" value="1"/>
</dbReference>
<dbReference type="FunFam" id="3.40.50.720:FF:000117">
    <property type="entry name" value="N-acetyl-gamma-glutamyl-phosphate reductase"/>
    <property type="match status" value="1"/>
</dbReference>
<dbReference type="Gene3D" id="3.30.360.10">
    <property type="entry name" value="Dihydrodipicolinate Reductase, domain 2"/>
    <property type="match status" value="1"/>
</dbReference>
<dbReference type="Gene3D" id="3.40.50.720">
    <property type="entry name" value="NAD(P)-binding Rossmann-like Domain"/>
    <property type="match status" value="1"/>
</dbReference>
<dbReference type="HAMAP" id="MF_00150">
    <property type="entry name" value="ArgC_type1"/>
    <property type="match status" value="1"/>
</dbReference>
<dbReference type="InterPro" id="IPR023013">
    <property type="entry name" value="AGPR_AS"/>
</dbReference>
<dbReference type="InterPro" id="IPR000706">
    <property type="entry name" value="AGPR_type-1"/>
</dbReference>
<dbReference type="InterPro" id="IPR036291">
    <property type="entry name" value="NAD(P)-bd_dom_sf"/>
</dbReference>
<dbReference type="InterPro" id="IPR050085">
    <property type="entry name" value="NAGSA_dehydrogenase"/>
</dbReference>
<dbReference type="InterPro" id="IPR000534">
    <property type="entry name" value="Semialdehyde_DH_NAD-bd"/>
</dbReference>
<dbReference type="NCBIfam" id="TIGR01850">
    <property type="entry name" value="argC"/>
    <property type="match status" value="1"/>
</dbReference>
<dbReference type="PANTHER" id="PTHR32338:SF10">
    <property type="entry name" value="N-ACETYL-GAMMA-GLUTAMYL-PHOSPHATE REDUCTASE, CHLOROPLASTIC-RELATED"/>
    <property type="match status" value="1"/>
</dbReference>
<dbReference type="PANTHER" id="PTHR32338">
    <property type="entry name" value="N-ACETYL-GAMMA-GLUTAMYL-PHOSPHATE REDUCTASE, CHLOROPLASTIC-RELATED-RELATED"/>
    <property type="match status" value="1"/>
</dbReference>
<dbReference type="Pfam" id="PF01118">
    <property type="entry name" value="Semialdhyde_dh"/>
    <property type="match status" value="1"/>
</dbReference>
<dbReference type="Pfam" id="PF22698">
    <property type="entry name" value="Semialdhyde_dhC_1"/>
    <property type="match status" value="1"/>
</dbReference>
<dbReference type="SMART" id="SM00859">
    <property type="entry name" value="Semialdhyde_dh"/>
    <property type="match status" value="1"/>
</dbReference>
<dbReference type="SUPFAM" id="SSF55347">
    <property type="entry name" value="Glyceraldehyde-3-phosphate dehydrogenase-like, C-terminal domain"/>
    <property type="match status" value="1"/>
</dbReference>
<dbReference type="SUPFAM" id="SSF51735">
    <property type="entry name" value="NAD(P)-binding Rossmann-fold domains"/>
    <property type="match status" value="1"/>
</dbReference>
<dbReference type="PROSITE" id="PS01224">
    <property type="entry name" value="ARGC"/>
    <property type="match status" value="1"/>
</dbReference>
<feature type="chain" id="PRO_1000203409" description="N-acetyl-gamma-glutamyl-phosphate reductase">
    <location>
        <begin position="1"/>
        <end position="334"/>
    </location>
</feature>
<feature type="active site" evidence="1">
    <location>
        <position position="154"/>
    </location>
</feature>
<protein>
    <recommendedName>
        <fullName evidence="1">N-acetyl-gamma-glutamyl-phosphate reductase</fullName>
        <shortName evidence="1">AGPR</shortName>
        <ecNumber evidence="1">1.2.1.38</ecNumber>
    </recommendedName>
    <alternativeName>
        <fullName evidence="1">N-acetyl-glutamate semialdehyde dehydrogenase</fullName>
        <shortName evidence="1">NAGSA dehydrogenase</shortName>
    </alternativeName>
</protein>
<proteinExistence type="inferred from homology"/>
<evidence type="ECO:0000255" key="1">
    <source>
        <dbReference type="HAMAP-Rule" id="MF_00150"/>
    </source>
</evidence>
<sequence>MLNTLIVGASGYTGAELALYLNRHPQMNITALMVSAQSVDAGKLISDLHPQLKGIIDVPVKPLTDAEEAAKGVDVVFLATDHKVSHDLAPVFLAAGCTVFDLSGAFRVQDAEFYRRYYGFEHQHPDWLAKAVYGLAEWRAESVKQAQLIAVPGCYPTAAQLALKPLLDAQLLNPAQWPVINAVSGVSGAGRKASMTNSFCEVSFQPYGIFNHRHEPEISTHLGTPVIFTPHLGNFARGILETITCRLQPGVTQQDVAEAYHNAYHDKPLVRLYDKGVPALKSVVGLPFCDIGFSVDGEHLIVVATEDNLLKGAAAQAVQCMNIRFGFPETQSLI</sequence>
<reference key="1">
    <citation type="submission" date="2009-07" db="EMBL/GenBank/DDBJ databases">
        <title>Complete sequence of Pectobacterium carotovorum subsp. carotovorum PC1.</title>
        <authorList>
            <consortium name="US DOE Joint Genome Institute"/>
            <person name="Lucas S."/>
            <person name="Copeland A."/>
            <person name="Lapidus A."/>
            <person name="Glavina del Rio T."/>
            <person name="Tice H."/>
            <person name="Bruce D."/>
            <person name="Goodwin L."/>
            <person name="Pitluck S."/>
            <person name="Munk A.C."/>
            <person name="Brettin T."/>
            <person name="Detter J.C."/>
            <person name="Han C."/>
            <person name="Tapia R."/>
            <person name="Larimer F."/>
            <person name="Land M."/>
            <person name="Hauser L."/>
            <person name="Kyrpides N."/>
            <person name="Mikhailova N."/>
            <person name="Balakrishnan V."/>
            <person name="Glasner J."/>
            <person name="Perna N.T."/>
        </authorList>
    </citation>
    <scope>NUCLEOTIDE SEQUENCE [LARGE SCALE GENOMIC DNA]</scope>
    <source>
        <strain>PC1</strain>
    </source>
</reference>
<gene>
    <name evidence="1" type="primary">argC</name>
    <name type="ordered locus">PC1_4060</name>
</gene>
<organism>
    <name type="scientific">Pectobacterium carotovorum subsp. carotovorum (strain PC1)</name>
    <dbReference type="NCBI Taxonomy" id="561230"/>
    <lineage>
        <taxon>Bacteria</taxon>
        <taxon>Pseudomonadati</taxon>
        <taxon>Pseudomonadota</taxon>
        <taxon>Gammaproteobacteria</taxon>
        <taxon>Enterobacterales</taxon>
        <taxon>Pectobacteriaceae</taxon>
        <taxon>Pectobacterium</taxon>
    </lineage>
</organism>
<comment type="function">
    <text evidence="1">Catalyzes the NADPH-dependent reduction of N-acetyl-5-glutamyl phosphate to yield N-acetyl-L-glutamate 5-semialdehyde.</text>
</comment>
<comment type="catalytic activity">
    <reaction evidence="1">
        <text>N-acetyl-L-glutamate 5-semialdehyde + phosphate + NADP(+) = N-acetyl-L-glutamyl 5-phosphate + NADPH + H(+)</text>
        <dbReference type="Rhea" id="RHEA:21588"/>
        <dbReference type="ChEBI" id="CHEBI:15378"/>
        <dbReference type="ChEBI" id="CHEBI:29123"/>
        <dbReference type="ChEBI" id="CHEBI:43474"/>
        <dbReference type="ChEBI" id="CHEBI:57783"/>
        <dbReference type="ChEBI" id="CHEBI:57936"/>
        <dbReference type="ChEBI" id="CHEBI:58349"/>
        <dbReference type="EC" id="1.2.1.38"/>
    </reaction>
</comment>
<comment type="pathway">
    <text evidence="1">Amino-acid biosynthesis; L-arginine biosynthesis; N(2)-acetyl-L-ornithine from L-glutamate: step 3/4.</text>
</comment>
<comment type="subcellular location">
    <subcellularLocation>
        <location evidence="1">Cytoplasm</location>
    </subcellularLocation>
</comment>
<comment type="similarity">
    <text evidence="1">Belongs to the NAGSA dehydrogenase family. Type 1 subfamily.</text>
</comment>
<keyword id="KW-0028">Amino-acid biosynthesis</keyword>
<keyword id="KW-0055">Arginine biosynthesis</keyword>
<keyword id="KW-0963">Cytoplasm</keyword>
<keyword id="KW-0521">NADP</keyword>
<keyword id="KW-0560">Oxidoreductase</keyword>